<accession>A0ASK0</accession>
<evidence type="ECO:0000250" key="1"/>
<evidence type="ECO:0000255" key="2"/>
<evidence type="ECO:0000305" key="3"/>
<proteinExistence type="evidence at transcript level"/>
<dbReference type="EMBL" id="AY730620">
    <property type="protein sequence ID" value="AAW62366.1"/>
    <property type="molecule type" value="mRNA"/>
</dbReference>
<dbReference type="SMR" id="A0ASK0"/>
<dbReference type="GO" id="GO:0005576">
    <property type="term" value="C:extracellular region"/>
    <property type="evidence" value="ECO:0007669"/>
    <property type="project" value="UniProtKB-SubCell"/>
</dbReference>
<dbReference type="GO" id="GO:0015459">
    <property type="term" value="F:potassium channel regulator activity"/>
    <property type="evidence" value="ECO:0007669"/>
    <property type="project" value="UniProtKB-KW"/>
</dbReference>
<dbReference type="GO" id="GO:0090729">
    <property type="term" value="F:toxin activity"/>
    <property type="evidence" value="ECO:0007669"/>
    <property type="project" value="UniProtKB-KW"/>
</dbReference>
<dbReference type="InterPro" id="IPR036574">
    <property type="entry name" value="Scorpion_toxin-like_sf"/>
</dbReference>
<dbReference type="SUPFAM" id="SSF57095">
    <property type="entry name" value="Scorpion toxin-like"/>
    <property type="match status" value="1"/>
</dbReference>
<name>KA14_OLIMR</name>
<sequence>MKIFFAILLILAVCSMAIWTVNGTPFEVRCATDADCARKCPGNPPCRNGFCACT</sequence>
<protein>
    <recommendedName>
        <fullName>Potassium channel toxin alpha-KTx 14.x</fullName>
    </recommendedName>
    <alternativeName>
        <fullName>BmKK14</fullName>
    </alternativeName>
</protein>
<comment type="function">
    <text evidence="1">Potassium channels inhibitor.</text>
</comment>
<comment type="subcellular location">
    <subcellularLocation>
        <location evidence="1">Secreted</location>
    </subcellularLocation>
</comment>
<comment type="tissue specificity">
    <text>Expressed by the venom gland.</text>
</comment>
<comment type="domain">
    <text>Has the structural arrangement of an alpha-helix connected to a beta-sheet by disulfide bonds (CSalpha/beta).</text>
</comment>
<comment type="similarity">
    <text evidence="3">Belongs to the short scorpion toxin superfamily. Potassium channel inhibitor family. Alpha-KTx 14 subfamily.</text>
</comment>
<reference key="1">
    <citation type="journal article" date="2005" name="IUBMB Life">
        <title>Adaptive evolution after gene duplication in alpha-KT x 14 subfamily from Buthus martensii Karsch.</title>
        <authorList>
            <person name="Cao Z."/>
            <person name="Mao X."/>
            <person name="Xu X."/>
            <person name="Sheng J."/>
            <person name="Dai C."/>
            <person name="Wu Y."/>
            <person name="Luo F."/>
            <person name="Sha Y."/>
            <person name="Jiang D."/>
            <person name="Li W."/>
        </authorList>
    </citation>
    <scope>NUCLEOTIDE SEQUENCE [MRNA]</scope>
    <source>
        <strain>Hubei</strain>
        <tissue>Venom gland</tissue>
    </source>
</reference>
<feature type="signal peptide" evidence="2">
    <location>
        <begin position="1"/>
        <end position="23"/>
    </location>
</feature>
<feature type="chain" id="PRO_5000147972" description="Potassium channel toxin alpha-KTx 14.x">
    <location>
        <begin position="24"/>
        <end position="54"/>
    </location>
</feature>
<feature type="disulfide bond" evidence="1">
    <location>
        <begin position="30"/>
        <end position="46"/>
    </location>
</feature>
<feature type="disulfide bond" evidence="1">
    <location>
        <begin position="36"/>
        <end position="51"/>
    </location>
</feature>
<feature type="disulfide bond" evidence="1">
    <location>
        <begin position="40"/>
        <end position="53"/>
    </location>
</feature>
<keyword id="KW-1015">Disulfide bond</keyword>
<keyword id="KW-0872">Ion channel impairing toxin</keyword>
<keyword id="KW-0528">Neurotoxin</keyword>
<keyword id="KW-0632">Potassium channel impairing toxin</keyword>
<keyword id="KW-0964">Secreted</keyword>
<keyword id="KW-0732">Signal</keyword>
<keyword id="KW-0800">Toxin</keyword>
<organism>
    <name type="scientific">Olivierus martensii</name>
    <name type="common">Manchurian scorpion</name>
    <name type="synonym">Mesobuthus martensii</name>
    <dbReference type="NCBI Taxonomy" id="34649"/>
    <lineage>
        <taxon>Eukaryota</taxon>
        <taxon>Metazoa</taxon>
        <taxon>Ecdysozoa</taxon>
        <taxon>Arthropoda</taxon>
        <taxon>Chelicerata</taxon>
        <taxon>Arachnida</taxon>
        <taxon>Scorpiones</taxon>
        <taxon>Buthida</taxon>
        <taxon>Buthoidea</taxon>
        <taxon>Buthidae</taxon>
        <taxon>Olivierus</taxon>
    </lineage>
</organism>